<feature type="chain" id="PRO_0000376625" description="2,3,4,5-tetrahydropyridine-2,6-dicarboxylate N-acetyltransferase">
    <location>
        <begin position="1"/>
        <end position="240"/>
    </location>
</feature>
<feature type="helix" evidence="2">
    <location>
        <begin position="6"/>
        <end position="15"/>
    </location>
</feature>
<feature type="strand" evidence="2">
    <location>
        <begin position="21"/>
        <end position="28"/>
    </location>
</feature>
<feature type="helix" evidence="2">
    <location>
        <begin position="30"/>
        <end position="32"/>
    </location>
</feature>
<feature type="strand" evidence="2">
    <location>
        <begin position="39"/>
        <end position="43"/>
    </location>
</feature>
<feature type="strand" evidence="2">
    <location>
        <begin position="45"/>
        <end position="53"/>
    </location>
</feature>
<feature type="helix" evidence="2">
    <location>
        <begin position="54"/>
        <end position="63"/>
    </location>
</feature>
<feature type="turn" evidence="2">
    <location>
        <begin position="64"/>
        <end position="67"/>
    </location>
</feature>
<feature type="strand" evidence="2">
    <location>
        <begin position="68"/>
        <end position="75"/>
    </location>
</feature>
<feature type="strand" evidence="2">
    <location>
        <begin position="78"/>
        <end position="80"/>
    </location>
</feature>
<feature type="strand" evidence="2">
    <location>
        <begin position="91"/>
        <end position="94"/>
    </location>
</feature>
<feature type="strand" evidence="2">
    <location>
        <begin position="99"/>
        <end position="103"/>
    </location>
</feature>
<feature type="strand" evidence="2">
    <location>
        <begin position="206"/>
        <end position="209"/>
    </location>
</feature>
<feature type="turn" evidence="2">
    <location>
        <begin position="210"/>
        <end position="213"/>
    </location>
</feature>
<feature type="strand" evidence="2">
    <location>
        <begin position="214"/>
        <end position="218"/>
    </location>
</feature>
<sequence>MKMMDANEIISFIQKSEKKTPVKVYIKGDLKEVTFPETVQAFVNKKSGVLFGEWSEIKTILDENSKYIVDYVVENDRRNSAIPMLDLKGIKARIEPGAIIRDHVEIGDNAVIMMNATINIGAVIGEGSMIDMNAVLGGRATVGKNCHVGAGAVLAGVIEPPSAKPVIVEDDVVIGANVVVLEGVTVGKGAVVAAGAVVTEDVPPYTVVAGTPARVIKEIDEKTKAKTEIKQELRQLNPEK</sequence>
<dbReference type="EC" id="2.3.1.89" evidence="1"/>
<dbReference type="EMBL" id="AE016879">
    <property type="protein sequence ID" value="AAP27916.1"/>
    <property type="molecule type" value="Genomic_DNA"/>
</dbReference>
<dbReference type="EMBL" id="AE017334">
    <property type="protein sequence ID" value="AAT33313.1"/>
    <property type="molecule type" value="Genomic_DNA"/>
</dbReference>
<dbReference type="EMBL" id="AE017225">
    <property type="protein sequence ID" value="AAT56192.1"/>
    <property type="molecule type" value="Genomic_DNA"/>
</dbReference>
<dbReference type="RefSeq" id="NP_846430.1">
    <property type="nucleotide sequence ID" value="NC_003997.3"/>
</dbReference>
<dbReference type="RefSeq" id="YP_030141.1">
    <property type="nucleotide sequence ID" value="NC_005945.1"/>
</dbReference>
<dbReference type="PDB" id="3R8Y">
    <property type="method" value="X-ray"/>
    <property type="resolution" value="1.70 A"/>
    <property type="chains" value="A/B/C/D/E/F=1-240"/>
</dbReference>
<dbReference type="PDBsum" id="3R8Y"/>
<dbReference type="SMR" id="Q81MQ2"/>
<dbReference type="STRING" id="261594.GBAA_4194"/>
<dbReference type="DNASU" id="1088777"/>
<dbReference type="KEGG" id="ban:BA_4194"/>
<dbReference type="KEGG" id="bar:GBAA_4194"/>
<dbReference type="KEGG" id="bat:BAS3891"/>
<dbReference type="PATRIC" id="fig|198094.11.peg.4163"/>
<dbReference type="eggNOG" id="COG2171">
    <property type="taxonomic scope" value="Bacteria"/>
</dbReference>
<dbReference type="HOGENOM" id="CLU_103751_0_0_9"/>
<dbReference type="OMA" id="KHCHIGA"/>
<dbReference type="OrthoDB" id="9788080at2"/>
<dbReference type="UniPathway" id="UPA00034">
    <property type="reaction ID" value="UER00022"/>
</dbReference>
<dbReference type="EvolutionaryTrace" id="Q81MQ2"/>
<dbReference type="Proteomes" id="UP000000427">
    <property type="component" value="Chromosome"/>
</dbReference>
<dbReference type="Proteomes" id="UP000000594">
    <property type="component" value="Chromosome"/>
</dbReference>
<dbReference type="GO" id="GO:0047200">
    <property type="term" value="F:tetrahydrodipicolinate N-acetyltransferase activity"/>
    <property type="evidence" value="ECO:0007669"/>
    <property type="project" value="UniProtKB-EC"/>
</dbReference>
<dbReference type="GO" id="GO:0019877">
    <property type="term" value="P:diaminopimelate biosynthetic process"/>
    <property type="evidence" value="ECO:0007669"/>
    <property type="project" value="UniProtKB-UniRule"/>
</dbReference>
<dbReference type="GO" id="GO:0009089">
    <property type="term" value="P:lysine biosynthetic process via diaminopimelate"/>
    <property type="evidence" value="ECO:0007669"/>
    <property type="project" value="UniProtKB-UniRule"/>
</dbReference>
<dbReference type="CDD" id="cd03350">
    <property type="entry name" value="LbH_THP_succinylT"/>
    <property type="match status" value="1"/>
</dbReference>
<dbReference type="Gene3D" id="2.160.10.10">
    <property type="entry name" value="Hexapeptide repeat proteins"/>
    <property type="match status" value="1"/>
</dbReference>
<dbReference type="Gene3D" id="3.30.70.250">
    <property type="entry name" value="Malonyl-CoA ACP transacylase, ACP-binding"/>
    <property type="match status" value="1"/>
</dbReference>
<dbReference type="HAMAP" id="MF_01691">
    <property type="entry name" value="DapH"/>
    <property type="match status" value="1"/>
</dbReference>
<dbReference type="InterPro" id="IPR019873">
    <property type="entry name" value="DapH"/>
</dbReference>
<dbReference type="InterPro" id="IPR013710">
    <property type="entry name" value="DapH_N"/>
</dbReference>
<dbReference type="InterPro" id="IPR001451">
    <property type="entry name" value="Hexapep"/>
</dbReference>
<dbReference type="InterPro" id="IPR018357">
    <property type="entry name" value="Hexapep_transf_CS"/>
</dbReference>
<dbReference type="InterPro" id="IPR050179">
    <property type="entry name" value="Trans_hexapeptide_repeat"/>
</dbReference>
<dbReference type="InterPro" id="IPR011004">
    <property type="entry name" value="Trimer_LpxA-like_sf"/>
</dbReference>
<dbReference type="NCBIfam" id="TIGR03532">
    <property type="entry name" value="DapD_Ac"/>
    <property type="match status" value="1"/>
</dbReference>
<dbReference type="PANTHER" id="PTHR43300:SF10">
    <property type="entry name" value="2,3,4,5-TETRAHYDROPYRIDINE-2,6-DICARBOXYLATE N-ACETYLTRANSFERASE"/>
    <property type="match status" value="1"/>
</dbReference>
<dbReference type="PANTHER" id="PTHR43300">
    <property type="entry name" value="ACETYLTRANSFERASE"/>
    <property type="match status" value="1"/>
</dbReference>
<dbReference type="Pfam" id="PF08503">
    <property type="entry name" value="DapH_N"/>
    <property type="match status" value="1"/>
</dbReference>
<dbReference type="Pfam" id="PF00132">
    <property type="entry name" value="Hexapep"/>
    <property type="match status" value="1"/>
</dbReference>
<dbReference type="Pfam" id="PF14602">
    <property type="entry name" value="Hexapep_2"/>
    <property type="match status" value="1"/>
</dbReference>
<dbReference type="SUPFAM" id="SSF51161">
    <property type="entry name" value="Trimeric LpxA-like enzymes"/>
    <property type="match status" value="1"/>
</dbReference>
<dbReference type="PROSITE" id="PS00101">
    <property type="entry name" value="HEXAPEP_TRANSFERASES"/>
    <property type="match status" value="1"/>
</dbReference>
<name>DAPH_BACAN</name>
<proteinExistence type="evidence at protein level"/>
<accession>Q81MQ2</accession>
<accession>Q6HU47</accession>
<accession>Q6KND1</accession>
<evidence type="ECO:0000255" key="1">
    <source>
        <dbReference type="HAMAP-Rule" id="MF_01691"/>
    </source>
</evidence>
<evidence type="ECO:0007829" key="2">
    <source>
        <dbReference type="PDB" id="3R8Y"/>
    </source>
</evidence>
<comment type="function">
    <text evidence="1">Catalyzes the transfer of an acetyl group from acetyl-CoA to tetrahydrodipicolinate.</text>
</comment>
<comment type="catalytic activity">
    <reaction evidence="1">
        <text>(S)-2,3,4,5-tetrahydrodipicolinate + acetyl-CoA + H2O = L-2-acetamido-6-oxoheptanedioate + CoA</text>
        <dbReference type="Rhea" id="RHEA:13085"/>
        <dbReference type="ChEBI" id="CHEBI:15377"/>
        <dbReference type="ChEBI" id="CHEBI:16845"/>
        <dbReference type="ChEBI" id="CHEBI:57287"/>
        <dbReference type="ChEBI" id="CHEBI:57288"/>
        <dbReference type="ChEBI" id="CHEBI:58117"/>
        <dbReference type="EC" id="2.3.1.89"/>
    </reaction>
</comment>
<comment type="pathway">
    <text evidence="1">Amino-acid biosynthesis; L-lysine biosynthesis via DAP pathway; LL-2,6-diaminopimelate from (S)-tetrahydrodipicolinate (acetylase route): step 1/3.</text>
</comment>
<comment type="similarity">
    <text evidence="1">Belongs to the transferase hexapeptide repeat family. DapH subfamily.</text>
</comment>
<protein>
    <recommendedName>
        <fullName evidence="1">2,3,4,5-tetrahydropyridine-2,6-dicarboxylate N-acetyltransferase</fullName>
        <ecNumber evidence="1">2.3.1.89</ecNumber>
    </recommendedName>
    <alternativeName>
        <fullName evidence="1">Tetrahydrodipicolinate N-acetyltransferase</fullName>
        <shortName evidence="1">THP acetyltransferase</shortName>
        <shortName evidence="1">Tetrahydropicolinate acetylase</shortName>
    </alternativeName>
</protein>
<reference key="1">
    <citation type="journal article" date="2003" name="Nature">
        <title>The genome sequence of Bacillus anthracis Ames and comparison to closely related bacteria.</title>
        <authorList>
            <person name="Read T.D."/>
            <person name="Peterson S.N."/>
            <person name="Tourasse N.J."/>
            <person name="Baillie L.W."/>
            <person name="Paulsen I.T."/>
            <person name="Nelson K.E."/>
            <person name="Tettelin H."/>
            <person name="Fouts D.E."/>
            <person name="Eisen J.A."/>
            <person name="Gill S.R."/>
            <person name="Holtzapple E.K."/>
            <person name="Okstad O.A."/>
            <person name="Helgason E."/>
            <person name="Rilstone J."/>
            <person name="Wu M."/>
            <person name="Kolonay J.F."/>
            <person name="Beanan M.J."/>
            <person name="Dodson R.J."/>
            <person name="Brinkac L.M."/>
            <person name="Gwinn M.L."/>
            <person name="DeBoy R.T."/>
            <person name="Madpu R."/>
            <person name="Daugherty S.C."/>
            <person name="Durkin A.S."/>
            <person name="Haft D.H."/>
            <person name="Nelson W.C."/>
            <person name="Peterson J.D."/>
            <person name="Pop M."/>
            <person name="Khouri H.M."/>
            <person name="Radune D."/>
            <person name="Benton J.L."/>
            <person name="Mahamoud Y."/>
            <person name="Jiang L."/>
            <person name="Hance I.R."/>
            <person name="Weidman J.F."/>
            <person name="Berry K.J."/>
            <person name="Plaut R.D."/>
            <person name="Wolf A.M."/>
            <person name="Watkins K.L."/>
            <person name="Nierman W.C."/>
            <person name="Hazen A."/>
            <person name="Cline R.T."/>
            <person name="Redmond C."/>
            <person name="Thwaite J.E."/>
            <person name="White O."/>
            <person name="Salzberg S.L."/>
            <person name="Thomason B."/>
            <person name="Friedlander A.M."/>
            <person name="Koehler T.M."/>
            <person name="Hanna P.C."/>
            <person name="Kolstoe A.-B."/>
            <person name="Fraser C.M."/>
        </authorList>
    </citation>
    <scope>NUCLEOTIDE SEQUENCE [LARGE SCALE GENOMIC DNA]</scope>
    <source>
        <strain>Ames / isolate Porton</strain>
    </source>
</reference>
<reference key="2">
    <citation type="submission" date="2004-01" db="EMBL/GenBank/DDBJ databases">
        <title>Complete genome sequence of Bacillus anthracis Sterne.</title>
        <authorList>
            <person name="Brettin T.S."/>
            <person name="Bruce D."/>
            <person name="Challacombe J.F."/>
            <person name="Gilna P."/>
            <person name="Han C."/>
            <person name="Hill K."/>
            <person name="Hitchcock P."/>
            <person name="Jackson P."/>
            <person name="Keim P."/>
            <person name="Longmire J."/>
            <person name="Lucas S."/>
            <person name="Okinaka R."/>
            <person name="Richardson P."/>
            <person name="Rubin E."/>
            <person name="Tice H."/>
        </authorList>
    </citation>
    <scope>NUCLEOTIDE SEQUENCE [LARGE SCALE GENOMIC DNA]</scope>
    <source>
        <strain>Sterne</strain>
    </source>
</reference>
<reference key="3">
    <citation type="journal article" date="2009" name="J. Bacteriol.">
        <title>The complete genome sequence of Bacillus anthracis Ames 'Ancestor'.</title>
        <authorList>
            <person name="Ravel J."/>
            <person name="Jiang L."/>
            <person name="Stanley S.T."/>
            <person name="Wilson M.R."/>
            <person name="Decker R.S."/>
            <person name="Read T.D."/>
            <person name="Worsham P."/>
            <person name="Keim P.S."/>
            <person name="Salzberg S.L."/>
            <person name="Fraser-Liggett C.M."/>
            <person name="Rasko D.A."/>
        </authorList>
    </citation>
    <scope>NUCLEOTIDE SEQUENCE [LARGE SCALE GENOMIC DNA]</scope>
    <source>
        <strain>Ames ancestor</strain>
    </source>
</reference>
<organism>
    <name type="scientific">Bacillus anthracis</name>
    <dbReference type="NCBI Taxonomy" id="1392"/>
    <lineage>
        <taxon>Bacteria</taxon>
        <taxon>Bacillati</taxon>
        <taxon>Bacillota</taxon>
        <taxon>Bacilli</taxon>
        <taxon>Bacillales</taxon>
        <taxon>Bacillaceae</taxon>
        <taxon>Bacillus</taxon>
        <taxon>Bacillus cereus group</taxon>
    </lineage>
</organism>
<keyword id="KW-0002">3D-structure</keyword>
<keyword id="KW-0012">Acyltransferase</keyword>
<keyword id="KW-0028">Amino-acid biosynthesis</keyword>
<keyword id="KW-0220">Diaminopimelate biosynthesis</keyword>
<keyword id="KW-0457">Lysine biosynthesis</keyword>
<keyword id="KW-1185">Reference proteome</keyword>
<keyword id="KW-0677">Repeat</keyword>
<keyword id="KW-0808">Transferase</keyword>
<gene>
    <name evidence="1" type="primary">dapH</name>
    <name type="ordered locus">BA_4194</name>
    <name type="ordered locus">GBAA_4194</name>
    <name type="ordered locus">BAS3891</name>
</gene>